<accession>Q3AHX7</accession>
<protein>
    <recommendedName>
        <fullName evidence="1">DNA-directed RNA polymerase subunit beta'</fullName>
        <shortName evidence="1">RNAP subunit beta'</shortName>
        <ecNumber evidence="1">2.7.7.6</ecNumber>
    </recommendedName>
    <alternativeName>
        <fullName evidence="1">RNA polymerase subunit beta'</fullName>
    </alternativeName>
    <alternativeName>
        <fullName evidence="1">Transcriptase subunit beta'</fullName>
    </alternativeName>
</protein>
<proteinExistence type="inferred from homology"/>
<sequence length="1362" mass="147979">MTSSSKSRKSKSSKASKAAKEAPVSASRPLSKTPPPFRNQVIDKRALKQLVAWSYKNHGTAVTSSMADNLKDLGFKYATQAAVSISVDDLKVPEAKKDLLGQAEEQITATEERYRLGEITEVERHTKVIDTWTETNERLVDAVKKNFDENAPLNSVWMMANSGARGNMSQVRQLVGMRGLMANPQGEIIDLPIRTNFREGLTVTEYVISSYGARKGLVDTALRTADSGYLTRRLVDVAQDVIVREDDCGTTRHIVVDAEDGKFGSRLVGRLTAAQVVNADGEVLAERDTEIDPPLSKSFEAAGVKAVSVRSPLTCEANRSVCRKCYGWALAHNELVDLGEAVGIIAAQSIGEPGTQLTMRTFHTGGVSTAETGVVRSKVAGTVEFGSKARVRPYRTPHGVNAQQAEVDFNLTIKPSGKGKAQKIEITNGSLLFVDNGAEIDADVTVAQIAAGAVKKSVEKATKDVICDLAGQVRYEEAIQPREVTDRQGNITLKAQRLGRMWVLSGDVYNLPPNAQPVVGSETQVTEGQVLAEASQRSEYGGEVRLRDSIGDSREVQIVTTAMTLKDFKLLEESTHSGEIWNLEAKDGTRYRLNTIPGSKIGSGEVIAELADDRFRTGTGGLVKFAPGLAIKKARSAKNGYEVNKGGTLLWIPQETHEINKDISLLMITDGQWIEAGTEVVKDIFSQTAGIVTVTQKNDILREIIVRSGEFHLCTDAKALERFEGDGQMVNPGEDIAKGLSVDTMKYVQTVETPEGKGLLLRPVEEYTIPNVAQLPELSHVKQANGPHLGIKATQRLAFKDNELIKSVEGVELLKTQLLLETFDTTPQMTVDVEKAPDKRAKTISRLRLVILESILVRRDTMSDSSHGSTHTELQVEDGVSVKAGDVVATTQILCKQAGLAQLPEATEADPVRRMIVERPEDTTTLSTSGKPVVSVGQRIVDGDALAEGETASCCGEIEAVSGNSVTLRLGRPYMVSPDSVLHVRDGNLVQRGDGLALLVFERQKTGDIVQGLPRIEELLEARRPRESTILCKKPGTVEIKQGEDDESLAVNVIESDDAIGEYPILLGRNIMVSDGQQVTAGELLTDGPINPHELLECYFEDLRSRKPLMEAAQEAIANLQHRLVTEVQNVYKSQGVSIDDKHIEVIVRQMTSKVRVEDAGDTTLLPGELIELRQVEDTNQAMAITGGAPAEFTPVLLGITKASLNTDSFISAASFQETTRVLTEAAIEGKSDWLRGLKENVIIGRLIPAGTGFSGFEEELQKEAGPHPDILSEDPAGYRRMQNLRPDYTVDMPPAASASAVLDDPSDADLEATRTRHNIDPSASNFAAFTRPDADNELKEEQVVDAEAVEGLQEEGLLSDE</sequence>
<organism>
    <name type="scientific">Synechococcus sp. (strain CC9605)</name>
    <dbReference type="NCBI Taxonomy" id="110662"/>
    <lineage>
        <taxon>Bacteria</taxon>
        <taxon>Bacillati</taxon>
        <taxon>Cyanobacteriota</taxon>
        <taxon>Cyanophyceae</taxon>
        <taxon>Synechococcales</taxon>
        <taxon>Synechococcaceae</taxon>
        <taxon>Synechococcus</taxon>
    </lineage>
</organism>
<dbReference type="EC" id="2.7.7.6" evidence="1"/>
<dbReference type="EMBL" id="CP000110">
    <property type="protein sequence ID" value="ABB35805.1"/>
    <property type="molecule type" value="Genomic_DNA"/>
</dbReference>
<dbReference type="RefSeq" id="WP_011365014.1">
    <property type="nucleotide sequence ID" value="NC_007516.1"/>
</dbReference>
<dbReference type="SMR" id="Q3AHX7"/>
<dbReference type="STRING" id="110662.Syncc9605_2065"/>
<dbReference type="KEGG" id="syd:Syncc9605_2065"/>
<dbReference type="eggNOG" id="COG0086">
    <property type="taxonomic scope" value="Bacteria"/>
</dbReference>
<dbReference type="HOGENOM" id="CLU_000524_1_0_3"/>
<dbReference type="OrthoDB" id="9815296at2"/>
<dbReference type="GO" id="GO:0000428">
    <property type="term" value="C:DNA-directed RNA polymerase complex"/>
    <property type="evidence" value="ECO:0007669"/>
    <property type="project" value="UniProtKB-KW"/>
</dbReference>
<dbReference type="GO" id="GO:0003677">
    <property type="term" value="F:DNA binding"/>
    <property type="evidence" value="ECO:0007669"/>
    <property type="project" value="UniProtKB-UniRule"/>
</dbReference>
<dbReference type="GO" id="GO:0003899">
    <property type="term" value="F:DNA-directed RNA polymerase activity"/>
    <property type="evidence" value="ECO:0007669"/>
    <property type="project" value="UniProtKB-UniRule"/>
</dbReference>
<dbReference type="GO" id="GO:0008270">
    <property type="term" value="F:zinc ion binding"/>
    <property type="evidence" value="ECO:0007669"/>
    <property type="project" value="UniProtKB-UniRule"/>
</dbReference>
<dbReference type="GO" id="GO:0006351">
    <property type="term" value="P:DNA-templated transcription"/>
    <property type="evidence" value="ECO:0007669"/>
    <property type="project" value="UniProtKB-UniRule"/>
</dbReference>
<dbReference type="CDD" id="cd02655">
    <property type="entry name" value="RNAP_beta'_C"/>
    <property type="match status" value="1"/>
</dbReference>
<dbReference type="FunFam" id="1.10.150.390:FF:000002">
    <property type="entry name" value="DNA-directed RNA polymerase subunit beta"/>
    <property type="match status" value="1"/>
</dbReference>
<dbReference type="Gene3D" id="1.10.132.30">
    <property type="match status" value="1"/>
</dbReference>
<dbReference type="Gene3D" id="1.10.150.390">
    <property type="match status" value="1"/>
</dbReference>
<dbReference type="Gene3D" id="1.10.1790.20">
    <property type="match status" value="1"/>
</dbReference>
<dbReference type="Gene3D" id="2.40.50.100">
    <property type="match status" value="1"/>
</dbReference>
<dbReference type="Gene3D" id="1.10.274.100">
    <property type="entry name" value="RNA polymerase Rpb1, domain 3"/>
    <property type="match status" value="1"/>
</dbReference>
<dbReference type="HAMAP" id="MF_01324">
    <property type="entry name" value="RNApol_bact_RpoC2"/>
    <property type="match status" value="1"/>
</dbReference>
<dbReference type="InterPro" id="IPR012756">
    <property type="entry name" value="DNA-dir_RpoC2_beta_pp"/>
</dbReference>
<dbReference type="InterPro" id="IPR045867">
    <property type="entry name" value="DNA-dir_RpoC_beta_prime"/>
</dbReference>
<dbReference type="InterPro" id="IPR007066">
    <property type="entry name" value="RNA_pol_Rpb1_3"/>
</dbReference>
<dbReference type="InterPro" id="IPR042102">
    <property type="entry name" value="RNA_pol_Rpb1_3_sf"/>
</dbReference>
<dbReference type="InterPro" id="IPR007083">
    <property type="entry name" value="RNA_pol_Rpb1_4"/>
</dbReference>
<dbReference type="InterPro" id="IPR007081">
    <property type="entry name" value="RNA_pol_Rpb1_5"/>
</dbReference>
<dbReference type="InterPro" id="IPR038120">
    <property type="entry name" value="Rpb1_funnel_sf"/>
</dbReference>
<dbReference type="NCBIfam" id="NF002724">
    <property type="entry name" value="PRK02597.1"/>
    <property type="match status" value="1"/>
</dbReference>
<dbReference type="NCBIfam" id="TIGR02388">
    <property type="entry name" value="rpoC2_cyan"/>
    <property type="match status" value="1"/>
</dbReference>
<dbReference type="PANTHER" id="PTHR19376">
    <property type="entry name" value="DNA-DIRECTED RNA POLYMERASE"/>
    <property type="match status" value="1"/>
</dbReference>
<dbReference type="PANTHER" id="PTHR19376:SF54">
    <property type="entry name" value="DNA-DIRECTED RNA POLYMERASE SUBUNIT BETA"/>
    <property type="match status" value="1"/>
</dbReference>
<dbReference type="Pfam" id="PF04983">
    <property type="entry name" value="RNA_pol_Rpb1_3"/>
    <property type="match status" value="1"/>
</dbReference>
<dbReference type="Pfam" id="PF05000">
    <property type="entry name" value="RNA_pol_Rpb1_4"/>
    <property type="match status" value="1"/>
</dbReference>
<dbReference type="Pfam" id="PF04998">
    <property type="entry name" value="RNA_pol_Rpb1_5"/>
    <property type="match status" value="1"/>
</dbReference>
<dbReference type="SUPFAM" id="SSF64484">
    <property type="entry name" value="beta and beta-prime subunits of DNA dependent RNA-polymerase"/>
    <property type="match status" value="1"/>
</dbReference>
<reference key="1">
    <citation type="submission" date="2005-07" db="EMBL/GenBank/DDBJ databases">
        <title>Complete sequence of Synechococcus sp. CC9605.</title>
        <authorList>
            <consortium name="US DOE Joint Genome Institute"/>
            <person name="Copeland A."/>
            <person name="Lucas S."/>
            <person name="Lapidus A."/>
            <person name="Barry K."/>
            <person name="Detter J.C."/>
            <person name="Glavina T."/>
            <person name="Hammon N."/>
            <person name="Israni S."/>
            <person name="Pitluck S."/>
            <person name="Schmutz J."/>
            <person name="Martinez M."/>
            <person name="Larimer F."/>
            <person name="Land M."/>
            <person name="Kyrpides N."/>
            <person name="Ivanova N."/>
            <person name="Richardson P."/>
        </authorList>
    </citation>
    <scope>NUCLEOTIDE SEQUENCE [LARGE SCALE GENOMIC DNA]</scope>
    <source>
        <strain>CC9605</strain>
    </source>
</reference>
<keyword id="KW-0240">DNA-directed RNA polymerase</keyword>
<keyword id="KW-0479">Metal-binding</keyword>
<keyword id="KW-0548">Nucleotidyltransferase</keyword>
<keyword id="KW-0804">Transcription</keyword>
<keyword id="KW-0808">Transferase</keyword>
<keyword id="KW-0862">Zinc</keyword>
<comment type="function">
    <text evidence="1">DNA-dependent RNA polymerase catalyzes the transcription of DNA into RNA using the four ribonucleoside triphosphates as substrates.</text>
</comment>
<comment type="catalytic activity">
    <reaction evidence="1">
        <text>RNA(n) + a ribonucleoside 5'-triphosphate = RNA(n+1) + diphosphate</text>
        <dbReference type="Rhea" id="RHEA:21248"/>
        <dbReference type="Rhea" id="RHEA-COMP:14527"/>
        <dbReference type="Rhea" id="RHEA-COMP:17342"/>
        <dbReference type="ChEBI" id="CHEBI:33019"/>
        <dbReference type="ChEBI" id="CHEBI:61557"/>
        <dbReference type="ChEBI" id="CHEBI:140395"/>
        <dbReference type="EC" id="2.7.7.6"/>
    </reaction>
</comment>
<comment type="cofactor">
    <cofactor evidence="1">
        <name>Zn(2+)</name>
        <dbReference type="ChEBI" id="CHEBI:29105"/>
    </cofactor>
    <text evidence="1">Binds 1 Zn(2+) ion per subunit.</text>
</comment>
<comment type="subunit">
    <text evidence="1">In cyanobacteria the RNAP catalytic core is composed of 2 alpha, 1 beta, 1 beta', 1 gamma and 1 omega subunit. When a sigma factor is associated with the core the holoenzyme is formed, which can initiate transcription.</text>
</comment>
<comment type="similarity">
    <text evidence="1">Belongs to the RNA polymerase beta' chain family. RpoC2 subfamily.</text>
</comment>
<name>RPOC2_SYNSC</name>
<gene>
    <name evidence="1" type="primary">rpoC2</name>
    <name type="ordered locus">Syncc9605_2065</name>
</gene>
<evidence type="ECO:0000255" key="1">
    <source>
        <dbReference type="HAMAP-Rule" id="MF_01324"/>
    </source>
</evidence>
<evidence type="ECO:0000256" key="2">
    <source>
        <dbReference type="SAM" id="MobiDB-lite"/>
    </source>
</evidence>
<feature type="chain" id="PRO_0000353535" description="DNA-directed RNA polymerase subunit beta'">
    <location>
        <begin position="1"/>
        <end position="1362"/>
    </location>
</feature>
<feature type="region of interest" description="Disordered" evidence="2">
    <location>
        <begin position="1"/>
        <end position="39"/>
    </location>
</feature>
<feature type="region of interest" description="Disordered" evidence="2">
    <location>
        <begin position="1316"/>
        <end position="1336"/>
    </location>
</feature>
<feature type="compositionally biased region" description="Basic residues" evidence="2">
    <location>
        <begin position="1"/>
        <end position="14"/>
    </location>
</feature>
<feature type="compositionally biased region" description="Low complexity" evidence="2">
    <location>
        <begin position="15"/>
        <end position="27"/>
    </location>
</feature>
<feature type="binding site" evidence="1">
    <location>
        <position position="248"/>
    </location>
    <ligand>
        <name>Zn(2+)</name>
        <dbReference type="ChEBI" id="CHEBI:29105"/>
    </ligand>
</feature>
<feature type="binding site" evidence="1">
    <location>
        <position position="315"/>
    </location>
    <ligand>
        <name>Zn(2+)</name>
        <dbReference type="ChEBI" id="CHEBI:29105"/>
    </ligand>
</feature>
<feature type="binding site" evidence="1">
    <location>
        <position position="322"/>
    </location>
    <ligand>
        <name>Zn(2+)</name>
        <dbReference type="ChEBI" id="CHEBI:29105"/>
    </ligand>
</feature>
<feature type="binding site" evidence="1">
    <location>
        <position position="325"/>
    </location>
    <ligand>
        <name>Zn(2+)</name>
        <dbReference type="ChEBI" id="CHEBI:29105"/>
    </ligand>
</feature>